<name>GLO2_SHEHH</name>
<keyword id="KW-0378">Hydrolase</keyword>
<keyword id="KW-0479">Metal-binding</keyword>
<keyword id="KW-0862">Zinc</keyword>
<dbReference type="EC" id="3.1.2.6" evidence="1"/>
<dbReference type="EMBL" id="CP000931">
    <property type="protein sequence ID" value="ABZ76436.1"/>
    <property type="molecule type" value="Genomic_DNA"/>
</dbReference>
<dbReference type="RefSeq" id="WP_012276968.1">
    <property type="nucleotide sequence ID" value="NC_010334.1"/>
</dbReference>
<dbReference type="SMR" id="B0TRL8"/>
<dbReference type="STRING" id="458817.Shal_1871"/>
<dbReference type="KEGG" id="shl:Shal_1871"/>
<dbReference type="eggNOG" id="COG0491">
    <property type="taxonomic scope" value="Bacteria"/>
</dbReference>
<dbReference type="HOGENOM" id="CLU_030571_4_1_6"/>
<dbReference type="OrthoDB" id="9802248at2"/>
<dbReference type="UniPathway" id="UPA00619">
    <property type="reaction ID" value="UER00676"/>
</dbReference>
<dbReference type="Proteomes" id="UP000001317">
    <property type="component" value="Chromosome"/>
</dbReference>
<dbReference type="GO" id="GO:0004416">
    <property type="term" value="F:hydroxyacylglutathione hydrolase activity"/>
    <property type="evidence" value="ECO:0007669"/>
    <property type="project" value="UniProtKB-UniRule"/>
</dbReference>
<dbReference type="GO" id="GO:0046872">
    <property type="term" value="F:metal ion binding"/>
    <property type="evidence" value="ECO:0007669"/>
    <property type="project" value="UniProtKB-KW"/>
</dbReference>
<dbReference type="GO" id="GO:0019243">
    <property type="term" value="P:methylglyoxal catabolic process to D-lactate via S-lactoyl-glutathione"/>
    <property type="evidence" value="ECO:0007669"/>
    <property type="project" value="InterPro"/>
</dbReference>
<dbReference type="CDD" id="cd07723">
    <property type="entry name" value="hydroxyacylglutathione_hydrolase_MBL-fold"/>
    <property type="match status" value="1"/>
</dbReference>
<dbReference type="Gene3D" id="3.60.15.10">
    <property type="entry name" value="Ribonuclease Z/Hydroxyacylglutathione hydrolase-like"/>
    <property type="match status" value="1"/>
</dbReference>
<dbReference type="HAMAP" id="MF_01374">
    <property type="entry name" value="Glyoxalase_2"/>
    <property type="match status" value="1"/>
</dbReference>
<dbReference type="InterPro" id="IPR035680">
    <property type="entry name" value="Clx_II_MBL"/>
</dbReference>
<dbReference type="InterPro" id="IPR050110">
    <property type="entry name" value="Glyoxalase_II_hydrolase"/>
</dbReference>
<dbReference type="InterPro" id="IPR032282">
    <property type="entry name" value="HAGH_C"/>
</dbReference>
<dbReference type="InterPro" id="IPR017782">
    <property type="entry name" value="Hydroxyacylglutathione_Hdrlase"/>
</dbReference>
<dbReference type="InterPro" id="IPR001279">
    <property type="entry name" value="Metallo-B-lactamas"/>
</dbReference>
<dbReference type="InterPro" id="IPR036866">
    <property type="entry name" value="RibonucZ/Hydroxyglut_hydro"/>
</dbReference>
<dbReference type="NCBIfam" id="TIGR03413">
    <property type="entry name" value="GSH_gloB"/>
    <property type="match status" value="1"/>
</dbReference>
<dbReference type="PANTHER" id="PTHR43705">
    <property type="entry name" value="HYDROXYACYLGLUTATHIONE HYDROLASE"/>
    <property type="match status" value="1"/>
</dbReference>
<dbReference type="PANTHER" id="PTHR43705:SF1">
    <property type="entry name" value="HYDROXYACYLGLUTATHIONE HYDROLASE GLOB"/>
    <property type="match status" value="1"/>
</dbReference>
<dbReference type="Pfam" id="PF16123">
    <property type="entry name" value="HAGH_C"/>
    <property type="match status" value="1"/>
</dbReference>
<dbReference type="Pfam" id="PF00753">
    <property type="entry name" value="Lactamase_B"/>
    <property type="match status" value="1"/>
</dbReference>
<dbReference type="PIRSF" id="PIRSF005457">
    <property type="entry name" value="Glx"/>
    <property type="match status" value="1"/>
</dbReference>
<dbReference type="SMART" id="SM00849">
    <property type="entry name" value="Lactamase_B"/>
    <property type="match status" value="1"/>
</dbReference>
<dbReference type="SUPFAM" id="SSF56281">
    <property type="entry name" value="Metallo-hydrolase/oxidoreductase"/>
    <property type="match status" value="1"/>
</dbReference>
<evidence type="ECO:0000255" key="1">
    <source>
        <dbReference type="HAMAP-Rule" id="MF_01374"/>
    </source>
</evidence>
<comment type="function">
    <text evidence="1">Thiolesterase that catalyzes the hydrolysis of S-D-lactoyl-glutathione to form glutathione and D-lactic acid.</text>
</comment>
<comment type="catalytic activity">
    <reaction evidence="1">
        <text>an S-(2-hydroxyacyl)glutathione + H2O = a 2-hydroxy carboxylate + glutathione + H(+)</text>
        <dbReference type="Rhea" id="RHEA:21864"/>
        <dbReference type="ChEBI" id="CHEBI:15377"/>
        <dbReference type="ChEBI" id="CHEBI:15378"/>
        <dbReference type="ChEBI" id="CHEBI:57925"/>
        <dbReference type="ChEBI" id="CHEBI:58896"/>
        <dbReference type="ChEBI" id="CHEBI:71261"/>
        <dbReference type="EC" id="3.1.2.6"/>
    </reaction>
</comment>
<comment type="cofactor">
    <cofactor evidence="1">
        <name>Zn(2+)</name>
        <dbReference type="ChEBI" id="CHEBI:29105"/>
    </cofactor>
    <text evidence="1">Binds 2 Zn(2+) ions per subunit.</text>
</comment>
<comment type="pathway">
    <text evidence="1">Secondary metabolite metabolism; methylglyoxal degradation; (R)-lactate from methylglyoxal: step 2/2.</text>
</comment>
<comment type="subunit">
    <text evidence="1">Monomer.</text>
</comment>
<comment type="similarity">
    <text evidence="1">Belongs to the metallo-beta-lactamase superfamily. Glyoxalase II family.</text>
</comment>
<accession>B0TRL8</accession>
<organism>
    <name type="scientific">Shewanella halifaxensis (strain HAW-EB4)</name>
    <dbReference type="NCBI Taxonomy" id="458817"/>
    <lineage>
        <taxon>Bacteria</taxon>
        <taxon>Pseudomonadati</taxon>
        <taxon>Pseudomonadota</taxon>
        <taxon>Gammaproteobacteria</taxon>
        <taxon>Alteromonadales</taxon>
        <taxon>Shewanellaceae</taxon>
        <taxon>Shewanella</taxon>
    </lineage>
</organism>
<gene>
    <name evidence="1" type="primary">gloB</name>
    <name type="ordered locus">Shal_1871</name>
</gene>
<proteinExistence type="inferred from homology"/>
<reference key="1">
    <citation type="submission" date="2008-01" db="EMBL/GenBank/DDBJ databases">
        <title>Complete sequence of Shewanella halifaxensis HAW-EB4.</title>
        <authorList>
            <consortium name="US DOE Joint Genome Institute"/>
            <person name="Copeland A."/>
            <person name="Lucas S."/>
            <person name="Lapidus A."/>
            <person name="Glavina del Rio T."/>
            <person name="Dalin E."/>
            <person name="Tice H."/>
            <person name="Bruce D."/>
            <person name="Goodwin L."/>
            <person name="Pitluck S."/>
            <person name="Sims D."/>
            <person name="Brettin T."/>
            <person name="Detter J.C."/>
            <person name="Han C."/>
            <person name="Kuske C.R."/>
            <person name="Schmutz J."/>
            <person name="Larimer F."/>
            <person name="Land M."/>
            <person name="Hauser L."/>
            <person name="Kyrpides N."/>
            <person name="Kim E."/>
            <person name="Zhao J.-S."/>
            <person name="Richardson P."/>
        </authorList>
    </citation>
    <scope>NUCLEOTIDE SEQUENCE [LARGE SCALE GENOMIC DNA]</scope>
    <source>
        <strain>HAW-EB4</strain>
    </source>
</reference>
<feature type="chain" id="PRO_1000144807" description="Hydroxyacylglutathione hydrolase">
    <location>
        <begin position="1"/>
        <end position="258"/>
    </location>
</feature>
<feature type="binding site" evidence="1">
    <location>
        <position position="55"/>
    </location>
    <ligand>
        <name>Zn(2+)</name>
        <dbReference type="ChEBI" id="CHEBI:29105"/>
        <label>1</label>
    </ligand>
</feature>
<feature type="binding site" evidence="1">
    <location>
        <position position="57"/>
    </location>
    <ligand>
        <name>Zn(2+)</name>
        <dbReference type="ChEBI" id="CHEBI:29105"/>
        <label>1</label>
    </ligand>
</feature>
<feature type="binding site" evidence="1">
    <location>
        <position position="59"/>
    </location>
    <ligand>
        <name>Zn(2+)</name>
        <dbReference type="ChEBI" id="CHEBI:29105"/>
        <label>2</label>
    </ligand>
</feature>
<feature type="binding site" evidence="1">
    <location>
        <position position="60"/>
    </location>
    <ligand>
        <name>Zn(2+)</name>
        <dbReference type="ChEBI" id="CHEBI:29105"/>
        <label>2</label>
    </ligand>
</feature>
<feature type="binding site" evidence="1">
    <location>
        <position position="115"/>
    </location>
    <ligand>
        <name>Zn(2+)</name>
        <dbReference type="ChEBI" id="CHEBI:29105"/>
        <label>1</label>
    </ligand>
</feature>
<feature type="binding site" evidence="1">
    <location>
        <position position="132"/>
    </location>
    <ligand>
        <name>Zn(2+)</name>
        <dbReference type="ChEBI" id="CHEBI:29105"/>
        <label>1</label>
    </ligand>
</feature>
<feature type="binding site" evidence="1">
    <location>
        <position position="132"/>
    </location>
    <ligand>
        <name>Zn(2+)</name>
        <dbReference type="ChEBI" id="CHEBI:29105"/>
        <label>2</label>
    </ligand>
</feature>
<feature type="binding site" evidence="1">
    <location>
        <position position="170"/>
    </location>
    <ligand>
        <name>Zn(2+)</name>
        <dbReference type="ChEBI" id="CHEBI:29105"/>
        <label>2</label>
    </ligand>
</feature>
<sequence>MLQITPLPAFNDNYIWVFQSQQSSGVYVVDPGDGQVVTDYLTQTNLPLLGILITHHHHDHTGGIEQLLKLFGEDTPVYGPQVENIAGVNRPISTNGNITLENIGLNTTVIQVPGHTSGHICYLIEDALFCGDTLFSGGCGRLFEGTAEQMYQSLTQLSLLPDNTRVFCAHEYTLANLHFAKAVEANNPALIEYTVKAHALRAENKPTLPSSIALEKAINPFLRLDSLEIQKSLAVQFQQPIADPVQSFALLRQWKDNF</sequence>
<protein>
    <recommendedName>
        <fullName evidence="1">Hydroxyacylglutathione hydrolase</fullName>
        <ecNumber evidence="1">3.1.2.6</ecNumber>
    </recommendedName>
    <alternativeName>
        <fullName evidence="1">Glyoxalase II</fullName>
        <shortName evidence="1">Glx II</shortName>
    </alternativeName>
</protein>